<keyword id="KW-0963">Cytoplasm</keyword>
<keyword id="KW-0227">DNA damage</keyword>
<keyword id="KW-0234">DNA repair</keyword>
<keyword id="KW-0235">DNA replication</keyword>
<keyword id="KW-0238">DNA-binding</keyword>
<keyword id="KW-0239">DNA-directed DNA polymerase</keyword>
<keyword id="KW-0460">Magnesium</keyword>
<keyword id="KW-0479">Metal-binding</keyword>
<keyword id="KW-0515">Mutator protein</keyword>
<keyword id="KW-0548">Nucleotidyltransferase</keyword>
<keyword id="KW-1185">Reference proteome</keyword>
<keyword id="KW-0808">Transferase</keyword>
<sequence>MILHVDMDAFYASVEQRDRPELRGRPVVVGGSEGRGVVTAASYEAREYGIHSAMPGSRAIKLCPHADFVRGRLDHYASVGRAVREIFHRFTPVVQPLSLDEAFLDVSGTIRLHGSPREIGINIRETIRRELDLPASVGIAPLKFVAKIASDIGKPNGFVEVPADGVREFLDPLPVSRLWGVGKVGQTKLQRLGYRTIADLRVKDLDALKSQLGRWGEHLWNLANGIDRRQVVVDHLAKGIGHERTFAEDLSDIESLNAVVSYLSEQTARRLRRARRLASTITLKYRREDFQTFSRARKLSTPTDSTLEILQVAEELLLEMRSREPRSVRLLGISLGGLTDADAPKQLHLFGEETGENASSKVDTLSDQIATKLGKHSLYRASSHQWVDRKNTKPKN</sequence>
<dbReference type="EC" id="2.7.7.7" evidence="1"/>
<dbReference type="EMBL" id="BX294140">
    <property type="protein sequence ID" value="CAD73655.1"/>
    <property type="molecule type" value="Genomic_DNA"/>
</dbReference>
<dbReference type="RefSeq" id="NP_865969.1">
    <property type="nucleotide sequence ID" value="NC_005027.1"/>
</dbReference>
<dbReference type="RefSeq" id="WP_011119785.1">
    <property type="nucleotide sequence ID" value="NC_005027.1"/>
</dbReference>
<dbReference type="SMR" id="Q7USY7"/>
<dbReference type="FunCoup" id="Q7USY7">
    <property type="interactions" value="439"/>
</dbReference>
<dbReference type="STRING" id="243090.RB4224"/>
<dbReference type="EnsemblBacteria" id="CAD73655">
    <property type="protein sequence ID" value="CAD73655"/>
    <property type="gene ID" value="RB4224"/>
</dbReference>
<dbReference type="KEGG" id="rba:RB4224"/>
<dbReference type="PATRIC" id="fig|243090.15.peg.1959"/>
<dbReference type="eggNOG" id="COG0389">
    <property type="taxonomic scope" value="Bacteria"/>
</dbReference>
<dbReference type="HOGENOM" id="CLU_012348_1_2_0"/>
<dbReference type="InParanoid" id="Q7USY7"/>
<dbReference type="OrthoDB" id="9808813at2"/>
<dbReference type="Proteomes" id="UP000001025">
    <property type="component" value="Chromosome"/>
</dbReference>
<dbReference type="GO" id="GO:0005737">
    <property type="term" value="C:cytoplasm"/>
    <property type="evidence" value="ECO:0007669"/>
    <property type="project" value="UniProtKB-SubCell"/>
</dbReference>
<dbReference type="GO" id="GO:0003684">
    <property type="term" value="F:damaged DNA binding"/>
    <property type="evidence" value="ECO:0007669"/>
    <property type="project" value="InterPro"/>
</dbReference>
<dbReference type="GO" id="GO:0003887">
    <property type="term" value="F:DNA-directed DNA polymerase activity"/>
    <property type="evidence" value="ECO:0000318"/>
    <property type="project" value="GO_Central"/>
</dbReference>
<dbReference type="GO" id="GO:0000287">
    <property type="term" value="F:magnesium ion binding"/>
    <property type="evidence" value="ECO:0007669"/>
    <property type="project" value="UniProtKB-UniRule"/>
</dbReference>
<dbReference type="GO" id="GO:0006261">
    <property type="term" value="P:DNA-templated DNA replication"/>
    <property type="evidence" value="ECO:0007669"/>
    <property type="project" value="UniProtKB-UniRule"/>
</dbReference>
<dbReference type="GO" id="GO:0042276">
    <property type="term" value="P:error-prone translesion synthesis"/>
    <property type="evidence" value="ECO:0000318"/>
    <property type="project" value="GO_Central"/>
</dbReference>
<dbReference type="GO" id="GO:0009432">
    <property type="term" value="P:SOS response"/>
    <property type="evidence" value="ECO:0000318"/>
    <property type="project" value="GO_Central"/>
</dbReference>
<dbReference type="CDD" id="cd03586">
    <property type="entry name" value="PolY_Pol_IV_kappa"/>
    <property type="match status" value="1"/>
</dbReference>
<dbReference type="FunFam" id="3.30.1490.100:FF:000004">
    <property type="entry name" value="DNA polymerase IV"/>
    <property type="match status" value="1"/>
</dbReference>
<dbReference type="FunFam" id="3.40.1170.60:FF:000001">
    <property type="entry name" value="DNA polymerase IV"/>
    <property type="match status" value="1"/>
</dbReference>
<dbReference type="Gene3D" id="3.30.70.270">
    <property type="match status" value="1"/>
</dbReference>
<dbReference type="Gene3D" id="3.40.1170.60">
    <property type="match status" value="1"/>
</dbReference>
<dbReference type="Gene3D" id="1.10.150.20">
    <property type="entry name" value="5' to 3' exonuclease, C-terminal subdomain"/>
    <property type="match status" value="1"/>
</dbReference>
<dbReference type="Gene3D" id="3.30.1490.100">
    <property type="entry name" value="DNA polymerase, Y-family, little finger domain"/>
    <property type="match status" value="1"/>
</dbReference>
<dbReference type="HAMAP" id="MF_01113">
    <property type="entry name" value="DNApol_IV"/>
    <property type="match status" value="1"/>
</dbReference>
<dbReference type="InterPro" id="IPR043502">
    <property type="entry name" value="DNA/RNA_pol_sf"/>
</dbReference>
<dbReference type="InterPro" id="IPR036775">
    <property type="entry name" value="DNA_pol_Y-fam_lit_finger_sf"/>
</dbReference>
<dbReference type="InterPro" id="IPR017961">
    <property type="entry name" value="DNA_pol_Y-fam_little_finger"/>
</dbReference>
<dbReference type="InterPro" id="IPR050116">
    <property type="entry name" value="DNA_polymerase-Y"/>
</dbReference>
<dbReference type="InterPro" id="IPR022880">
    <property type="entry name" value="DNApol_IV"/>
</dbReference>
<dbReference type="InterPro" id="IPR053848">
    <property type="entry name" value="IMS_HHH_1"/>
</dbReference>
<dbReference type="InterPro" id="IPR043128">
    <property type="entry name" value="Rev_trsase/Diguanyl_cyclase"/>
</dbReference>
<dbReference type="InterPro" id="IPR001126">
    <property type="entry name" value="UmuC"/>
</dbReference>
<dbReference type="NCBIfam" id="NF002677">
    <property type="entry name" value="PRK02406.1"/>
    <property type="match status" value="1"/>
</dbReference>
<dbReference type="NCBIfam" id="NF003015">
    <property type="entry name" value="PRK03858.1"/>
    <property type="match status" value="1"/>
</dbReference>
<dbReference type="PANTHER" id="PTHR11076:SF33">
    <property type="entry name" value="DNA POLYMERASE KAPPA"/>
    <property type="match status" value="1"/>
</dbReference>
<dbReference type="PANTHER" id="PTHR11076">
    <property type="entry name" value="DNA REPAIR POLYMERASE UMUC / TRANSFERASE FAMILY MEMBER"/>
    <property type="match status" value="1"/>
</dbReference>
<dbReference type="Pfam" id="PF00817">
    <property type="entry name" value="IMS"/>
    <property type="match status" value="1"/>
</dbReference>
<dbReference type="Pfam" id="PF11799">
    <property type="entry name" value="IMS_C"/>
    <property type="match status" value="1"/>
</dbReference>
<dbReference type="Pfam" id="PF21999">
    <property type="entry name" value="IMS_HHH_1"/>
    <property type="match status" value="1"/>
</dbReference>
<dbReference type="SUPFAM" id="SSF56672">
    <property type="entry name" value="DNA/RNA polymerases"/>
    <property type="match status" value="1"/>
</dbReference>
<dbReference type="SUPFAM" id="SSF100879">
    <property type="entry name" value="Lesion bypass DNA polymerase (Y-family), little finger domain"/>
    <property type="match status" value="1"/>
</dbReference>
<dbReference type="PROSITE" id="PS50173">
    <property type="entry name" value="UMUC"/>
    <property type="match status" value="1"/>
</dbReference>
<feature type="chain" id="PRO_0000232663" description="DNA polymerase IV">
    <location>
        <begin position="1"/>
        <end position="396"/>
    </location>
</feature>
<feature type="domain" description="UmuC" evidence="1">
    <location>
        <begin position="2"/>
        <end position="182"/>
    </location>
</feature>
<feature type="active site" evidence="1">
    <location>
        <position position="101"/>
    </location>
</feature>
<feature type="binding site" evidence="1">
    <location>
        <position position="6"/>
    </location>
    <ligand>
        <name>Mg(2+)</name>
        <dbReference type="ChEBI" id="CHEBI:18420"/>
    </ligand>
</feature>
<feature type="binding site" evidence="1">
    <location>
        <position position="100"/>
    </location>
    <ligand>
        <name>Mg(2+)</name>
        <dbReference type="ChEBI" id="CHEBI:18420"/>
    </ligand>
</feature>
<feature type="site" description="Substrate discrimination" evidence="1">
    <location>
        <position position="11"/>
    </location>
</feature>
<evidence type="ECO:0000255" key="1">
    <source>
        <dbReference type="HAMAP-Rule" id="MF_01113"/>
    </source>
</evidence>
<organism>
    <name type="scientific">Rhodopirellula baltica (strain DSM 10527 / NCIMB 13988 / SH1)</name>
    <dbReference type="NCBI Taxonomy" id="243090"/>
    <lineage>
        <taxon>Bacteria</taxon>
        <taxon>Pseudomonadati</taxon>
        <taxon>Planctomycetota</taxon>
        <taxon>Planctomycetia</taxon>
        <taxon>Pirellulales</taxon>
        <taxon>Pirellulaceae</taxon>
        <taxon>Rhodopirellula</taxon>
    </lineage>
</organism>
<name>DPO4_RHOBA</name>
<proteinExistence type="inferred from homology"/>
<protein>
    <recommendedName>
        <fullName evidence="1">DNA polymerase IV</fullName>
        <shortName evidence="1">Pol IV</shortName>
        <ecNumber evidence="1">2.7.7.7</ecNumber>
    </recommendedName>
</protein>
<accession>Q7USY7</accession>
<comment type="function">
    <text evidence="1">Poorly processive, error-prone DNA polymerase involved in untargeted mutagenesis. Copies undamaged DNA at stalled replication forks, which arise in vivo from mismatched or misaligned primer ends. These misaligned primers can be extended by PolIV. Exhibits no 3'-5' exonuclease (proofreading) activity. May be involved in translesional synthesis, in conjunction with the beta clamp from PolIII.</text>
</comment>
<comment type="catalytic activity">
    <reaction evidence="1">
        <text>DNA(n) + a 2'-deoxyribonucleoside 5'-triphosphate = DNA(n+1) + diphosphate</text>
        <dbReference type="Rhea" id="RHEA:22508"/>
        <dbReference type="Rhea" id="RHEA-COMP:17339"/>
        <dbReference type="Rhea" id="RHEA-COMP:17340"/>
        <dbReference type="ChEBI" id="CHEBI:33019"/>
        <dbReference type="ChEBI" id="CHEBI:61560"/>
        <dbReference type="ChEBI" id="CHEBI:173112"/>
        <dbReference type="EC" id="2.7.7.7"/>
    </reaction>
</comment>
<comment type="cofactor">
    <cofactor evidence="1">
        <name>Mg(2+)</name>
        <dbReference type="ChEBI" id="CHEBI:18420"/>
    </cofactor>
    <text evidence="1">Binds 2 magnesium ions per subunit.</text>
</comment>
<comment type="subunit">
    <text evidence="1">Monomer.</text>
</comment>
<comment type="subcellular location">
    <subcellularLocation>
        <location evidence="1">Cytoplasm</location>
    </subcellularLocation>
</comment>
<comment type="similarity">
    <text evidence="1">Belongs to the DNA polymerase type-Y family.</text>
</comment>
<reference key="1">
    <citation type="journal article" date="2003" name="Proc. Natl. Acad. Sci. U.S.A.">
        <title>Complete genome sequence of the marine planctomycete Pirellula sp. strain 1.</title>
        <authorList>
            <person name="Gloeckner F.O."/>
            <person name="Kube M."/>
            <person name="Bauer M."/>
            <person name="Teeling H."/>
            <person name="Lombardot T."/>
            <person name="Ludwig W."/>
            <person name="Gade D."/>
            <person name="Beck A."/>
            <person name="Borzym K."/>
            <person name="Heitmann K."/>
            <person name="Rabus R."/>
            <person name="Schlesner H."/>
            <person name="Amann R."/>
            <person name="Reinhardt R."/>
        </authorList>
    </citation>
    <scope>NUCLEOTIDE SEQUENCE [LARGE SCALE GENOMIC DNA]</scope>
    <source>
        <strain>DSM 10527 / NCIMB 13988 / SH1</strain>
    </source>
</reference>
<gene>
    <name evidence="1" type="primary">dinB</name>
    <name type="ordered locus">RB4224</name>
</gene>